<dbReference type="EMBL" id="CP000526">
    <property type="protein sequence ID" value="ABM49877.1"/>
    <property type="molecule type" value="Genomic_DNA"/>
</dbReference>
<dbReference type="RefSeq" id="WP_004192143.1">
    <property type="nucleotide sequence ID" value="NC_008785.1"/>
</dbReference>
<dbReference type="SMR" id="A1V566"/>
<dbReference type="GeneID" id="93060697"/>
<dbReference type="KEGG" id="bmv:BMASAVP1_A2053"/>
<dbReference type="HOGENOM" id="CLU_073981_2_1_4"/>
<dbReference type="GO" id="GO:0005829">
    <property type="term" value="C:cytosol"/>
    <property type="evidence" value="ECO:0007669"/>
    <property type="project" value="GOC"/>
</dbReference>
<dbReference type="GO" id="GO:0043023">
    <property type="term" value="F:ribosomal large subunit binding"/>
    <property type="evidence" value="ECO:0007669"/>
    <property type="project" value="TreeGrafter"/>
</dbReference>
<dbReference type="GO" id="GO:0002184">
    <property type="term" value="P:cytoplasmic translational termination"/>
    <property type="evidence" value="ECO:0007669"/>
    <property type="project" value="TreeGrafter"/>
</dbReference>
<dbReference type="CDD" id="cd00520">
    <property type="entry name" value="RRF"/>
    <property type="match status" value="1"/>
</dbReference>
<dbReference type="FunFam" id="1.10.132.20:FF:000001">
    <property type="entry name" value="Ribosome-recycling factor"/>
    <property type="match status" value="1"/>
</dbReference>
<dbReference type="FunFam" id="3.30.1360.40:FF:000001">
    <property type="entry name" value="Ribosome-recycling factor"/>
    <property type="match status" value="1"/>
</dbReference>
<dbReference type="Gene3D" id="3.30.1360.40">
    <property type="match status" value="1"/>
</dbReference>
<dbReference type="Gene3D" id="1.10.132.20">
    <property type="entry name" value="Ribosome-recycling factor"/>
    <property type="match status" value="1"/>
</dbReference>
<dbReference type="HAMAP" id="MF_00040">
    <property type="entry name" value="RRF"/>
    <property type="match status" value="1"/>
</dbReference>
<dbReference type="InterPro" id="IPR002661">
    <property type="entry name" value="Ribosome_recyc_fac"/>
</dbReference>
<dbReference type="InterPro" id="IPR023584">
    <property type="entry name" value="Ribosome_recyc_fac_dom"/>
</dbReference>
<dbReference type="InterPro" id="IPR036191">
    <property type="entry name" value="RRF_sf"/>
</dbReference>
<dbReference type="NCBIfam" id="TIGR00496">
    <property type="entry name" value="frr"/>
    <property type="match status" value="1"/>
</dbReference>
<dbReference type="PANTHER" id="PTHR20982:SF3">
    <property type="entry name" value="MITOCHONDRIAL RIBOSOME RECYCLING FACTOR PSEUDO 1"/>
    <property type="match status" value="1"/>
</dbReference>
<dbReference type="PANTHER" id="PTHR20982">
    <property type="entry name" value="RIBOSOME RECYCLING FACTOR"/>
    <property type="match status" value="1"/>
</dbReference>
<dbReference type="Pfam" id="PF01765">
    <property type="entry name" value="RRF"/>
    <property type="match status" value="1"/>
</dbReference>
<dbReference type="SUPFAM" id="SSF55194">
    <property type="entry name" value="Ribosome recycling factor, RRF"/>
    <property type="match status" value="1"/>
</dbReference>
<gene>
    <name evidence="1" type="primary">frr</name>
    <name type="ordered locus">BMASAVP1_A2053</name>
</gene>
<accession>A1V566</accession>
<name>RRF_BURMS</name>
<organism>
    <name type="scientific">Burkholderia mallei (strain SAVP1)</name>
    <dbReference type="NCBI Taxonomy" id="320388"/>
    <lineage>
        <taxon>Bacteria</taxon>
        <taxon>Pseudomonadati</taxon>
        <taxon>Pseudomonadota</taxon>
        <taxon>Betaproteobacteria</taxon>
        <taxon>Burkholderiales</taxon>
        <taxon>Burkholderiaceae</taxon>
        <taxon>Burkholderia</taxon>
        <taxon>pseudomallei group</taxon>
    </lineage>
</organism>
<proteinExistence type="inferred from homology"/>
<keyword id="KW-0963">Cytoplasm</keyword>
<keyword id="KW-0648">Protein biosynthesis</keyword>
<comment type="function">
    <text evidence="1">Responsible for the release of ribosomes from messenger RNA at the termination of protein biosynthesis. May increase the efficiency of translation by recycling ribosomes from one round of translation to another.</text>
</comment>
<comment type="subcellular location">
    <subcellularLocation>
        <location evidence="1">Cytoplasm</location>
    </subcellularLocation>
</comment>
<comment type="similarity">
    <text evidence="1">Belongs to the RRF family.</text>
</comment>
<feature type="chain" id="PRO_1000003120" description="Ribosome-recycling factor">
    <location>
        <begin position="1"/>
        <end position="186"/>
    </location>
</feature>
<sequence length="186" mass="20899">MSVADIKKSVEQKMQRSIEAFKNDLAKIRTGRAHTGLLDHVQVDYYGSMVPISQVANLTLVDARTIGVQPWEKTMVAKVEKAIREADLGLNPATSGDLIRVPMPPLTEERRRELTKVVKSEGETAKVAVRNLRRDANEQLKKLVKDKEISEDDERRASDDVQKLTDKHVAEIDKLVQAKDAEIMTV</sequence>
<evidence type="ECO:0000255" key="1">
    <source>
        <dbReference type="HAMAP-Rule" id="MF_00040"/>
    </source>
</evidence>
<protein>
    <recommendedName>
        <fullName evidence="1">Ribosome-recycling factor</fullName>
        <shortName evidence="1">RRF</shortName>
    </recommendedName>
    <alternativeName>
        <fullName evidence="1">Ribosome-releasing factor</fullName>
    </alternativeName>
</protein>
<reference key="1">
    <citation type="journal article" date="2010" name="Genome Biol. Evol.">
        <title>Continuing evolution of Burkholderia mallei through genome reduction and large-scale rearrangements.</title>
        <authorList>
            <person name="Losada L."/>
            <person name="Ronning C.M."/>
            <person name="DeShazer D."/>
            <person name="Woods D."/>
            <person name="Fedorova N."/>
            <person name="Kim H.S."/>
            <person name="Shabalina S.A."/>
            <person name="Pearson T.R."/>
            <person name="Brinkac L."/>
            <person name="Tan P."/>
            <person name="Nandi T."/>
            <person name="Crabtree J."/>
            <person name="Badger J."/>
            <person name="Beckstrom-Sternberg S."/>
            <person name="Saqib M."/>
            <person name="Schutzer S.E."/>
            <person name="Keim P."/>
            <person name="Nierman W.C."/>
        </authorList>
    </citation>
    <scope>NUCLEOTIDE SEQUENCE [LARGE SCALE GENOMIC DNA]</scope>
    <source>
        <strain>SAVP1</strain>
    </source>
</reference>